<gene>
    <name evidence="1" type="primary">engB</name>
    <name type="ordered locus">LCA_1060</name>
</gene>
<proteinExistence type="inferred from homology"/>
<keyword id="KW-0131">Cell cycle</keyword>
<keyword id="KW-0132">Cell division</keyword>
<keyword id="KW-0342">GTP-binding</keyword>
<keyword id="KW-0460">Magnesium</keyword>
<keyword id="KW-0479">Metal-binding</keyword>
<keyword id="KW-0547">Nucleotide-binding</keyword>
<keyword id="KW-1185">Reference proteome</keyword>
<keyword id="KW-0717">Septation</keyword>
<comment type="function">
    <text evidence="1">Necessary for normal cell division and for the maintenance of normal septation.</text>
</comment>
<comment type="cofactor">
    <cofactor evidence="1">
        <name>Mg(2+)</name>
        <dbReference type="ChEBI" id="CHEBI:18420"/>
    </cofactor>
</comment>
<comment type="similarity">
    <text evidence="1">Belongs to the TRAFAC class TrmE-Era-EngA-EngB-Septin-like GTPase superfamily. EngB GTPase family.</text>
</comment>
<protein>
    <recommendedName>
        <fullName evidence="1">Probable GTP-binding protein EngB</fullName>
    </recommendedName>
</protein>
<feature type="chain" id="PRO_0000266881" description="Probable GTP-binding protein EngB">
    <location>
        <begin position="1"/>
        <end position="199"/>
    </location>
</feature>
<feature type="domain" description="EngB-type G" evidence="1">
    <location>
        <begin position="22"/>
        <end position="195"/>
    </location>
</feature>
<feature type="binding site" evidence="1">
    <location>
        <begin position="30"/>
        <end position="37"/>
    </location>
    <ligand>
        <name>GTP</name>
        <dbReference type="ChEBI" id="CHEBI:37565"/>
    </ligand>
</feature>
<feature type="binding site" evidence="1">
    <location>
        <position position="37"/>
    </location>
    <ligand>
        <name>Mg(2+)</name>
        <dbReference type="ChEBI" id="CHEBI:18420"/>
    </ligand>
</feature>
<feature type="binding site" evidence="1">
    <location>
        <begin position="57"/>
        <end position="61"/>
    </location>
    <ligand>
        <name>GTP</name>
        <dbReference type="ChEBI" id="CHEBI:37565"/>
    </ligand>
</feature>
<feature type="binding site" evidence="1">
    <location>
        <position position="59"/>
    </location>
    <ligand>
        <name>Mg(2+)</name>
        <dbReference type="ChEBI" id="CHEBI:18420"/>
    </ligand>
</feature>
<feature type="binding site" evidence="1">
    <location>
        <begin position="75"/>
        <end position="78"/>
    </location>
    <ligand>
        <name>GTP</name>
        <dbReference type="ChEBI" id="CHEBI:37565"/>
    </ligand>
</feature>
<feature type="binding site" evidence="1">
    <location>
        <begin position="142"/>
        <end position="145"/>
    </location>
    <ligand>
        <name>GTP</name>
        <dbReference type="ChEBI" id="CHEBI:37565"/>
    </ligand>
</feature>
<feature type="binding site" evidence="1">
    <location>
        <begin position="174"/>
        <end position="176"/>
    </location>
    <ligand>
        <name>GTP</name>
        <dbReference type="ChEBI" id="CHEBI:37565"/>
    </ligand>
</feature>
<name>ENGB_LATSS</name>
<accession>Q38WS0</accession>
<organism>
    <name type="scientific">Latilactobacillus sakei subsp. sakei (strain 23K)</name>
    <name type="common">Lactobacillus sakei subsp. sakei</name>
    <dbReference type="NCBI Taxonomy" id="314315"/>
    <lineage>
        <taxon>Bacteria</taxon>
        <taxon>Bacillati</taxon>
        <taxon>Bacillota</taxon>
        <taxon>Bacilli</taxon>
        <taxon>Lactobacillales</taxon>
        <taxon>Lactobacillaceae</taxon>
        <taxon>Latilactobacillus</taxon>
    </lineage>
</organism>
<sequence>MEVHEVEMVMSAVAASQYPTDQLPEIALSGRSNVGKSSLINKLINRKSYARTSSKPGKTQTLNFYRVENELYFVDVPGYGYAKVSKKQREKFGQIIEAYLTNRDNLRGLISLIDGRHEPTDDDIAMYVFAKYYDIPVLVVATKMDKISTGKWNRQEKIIKEALDFNPVDKFVCFSALTGAGKDTVWEWIEQQCDIGGRR</sequence>
<evidence type="ECO:0000255" key="1">
    <source>
        <dbReference type="HAMAP-Rule" id="MF_00321"/>
    </source>
</evidence>
<dbReference type="EMBL" id="CR936503">
    <property type="protein sequence ID" value="CAI55361.1"/>
    <property type="molecule type" value="Genomic_DNA"/>
</dbReference>
<dbReference type="SMR" id="Q38WS0"/>
<dbReference type="STRING" id="314315.LCA_1060"/>
<dbReference type="KEGG" id="lsa:LCA_1060"/>
<dbReference type="eggNOG" id="COG0218">
    <property type="taxonomic scope" value="Bacteria"/>
</dbReference>
<dbReference type="HOGENOM" id="CLU_033732_3_0_9"/>
<dbReference type="OrthoDB" id="9804921at2"/>
<dbReference type="Proteomes" id="UP000002707">
    <property type="component" value="Chromosome"/>
</dbReference>
<dbReference type="GO" id="GO:0005829">
    <property type="term" value="C:cytosol"/>
    <property type="evidence" value="ECO:0007669"/>
    <property type="project" value="TreeGrafter"/>
</dbReference>
<dbReference type="GO" id="GO:0005525">
    <property type="term" value="F:GTP binding"/>
    <property type="evidence" value="ECO:0007669"/>
    <property type="project" value="UniProtKB-UniRule"/>
</dbReference>
<dbReference type="GO" id="GO:0046872">
    <property type="term" value="F:metal ion binding"/>
    <property type="evidence" value="ECO:0007669"/>
    <property type="project" value="UniProtKB-KW"/>
</dbReference>
<dbReference type="GO" id="GO:0000917">
    <property type="term" value="P:division septum assembly"/>
    <property type="evidence" value="ECO:0007669"/>
    <property type="project" value="UniProtKB-KW"/>
</dbReference>
<dbReference type="CDD" id="cd01876">
    <property type="entry name" value="YihA_EngB"/>
    <property type="match status" value="1"/>
</dbReference>
<dbReference type="FunFam" id="3.40.50.300:FF:000098">
    <property type="entry name" value="Probable GTP-binding protein EngB"/>
    <property type="match status" value="1"/>
</dbReference>
<dbReference type="Gene3D" id="3.40.50.300">
    <property type="entry name" value="P-loop containing nucleotide triphosphate hydrolases"/>
    <property type="match status" value="1"/>
</dbReference>
<dbReference type="HAMAP" id="MF_00321">
    <property type="entry name" value="GTPase_EngB"/>
    <property type="match status" value="1"/>
</dbReference>
<dbReference type="InterPro" id="IPR030393">
    <property type="entry name" value="G_ENGB_dom"/>
</dbReference>
<dbReference type="InterPro" id="IPR006073">
    <property type="entry name" value="GTP-bd"/>
</dbReference>
<dbReference type="InterPro" id="IPR019987">
    <property type="entry name" value="GTP-bd_ribosome_bio_YsxC"/>
</dbReference>
<dbReference type="InterPro" id="IPR027417">
    <property type="entry name" value="P-loop_NTPase"/>
</dbReference>
<dbReference type="InterPro" id="IPR005225">
    <property type="entry name" value="Small_GTP-bd"/>
</dbReference>
<dbReference type="NCBIfam" id="TIGR03598">
    <property type="entry name" value="GTPase_YsxC"/>
    <property type="match status" value="1"/>
</dbReference>
<dbReference type="NCBIfam" id="TIGR00231">
    <property type="entry name" value="small_GTP"/>
    <property type="match status" value="1"/>
</dbReference>
<dbReference type="PANTHER" id="PTHR11649:SF13">
    <property type="entry name" value="ENGB-TYPE G DOMAIN-CONTAINING PROTEIN"/>
    <property type="match status" value="1"/>
</dbReference>
<dbReference type="PANTHER" id="PTHR11649">
    <property type="entry name" value="MSS1/TRME-RELATED GTP-BINDING PROTEIN"/>
    <property type="match status" value="1"/>
</dbReference>
<dbReference type="Pfam" id="PF01926">
    <property type="entry name" value="MMR_HSR1"/>
    <property type="match status" value="1"/>
</dbReference>
<dbReference type="SUPFAM" id="SSF52540">
    <property type="entry name" value="P-loop containing nucleoside triphosphate hydrolases"/>
    <property type="match status" value="1"/>
</dbReference>
<dbReference type="PROSITE" id="PS51706">
    <property type="entry name" value="G_ENGB"/>
    <property type="match status" value="1"/>
</dbReference>
<reference key="1">
    <citation type="journal article" date="2005" name="Nat. Biotechnol.">
        <title>The complete genome sequence of the meat-borne lactic acid bacterium Lactobacillus sakei 23K.</title>
        <authorList>
            <person name="Chaillou S."/>
            <person name="Champomier-Verges M.-C."/>
            <person name="Cornet M."/>
            <person name="Crutz-Le Coq A.-M."/>
            <person name="Dudez A.-M."/>
            <person name="Martin V."/>
            <person name="Beaufils S."/>
            <person name="Darbon-Rongere E."/>
            <person name="Bossy R."/>
            <person name="Loux V."/>
            <person name="Zagorec M."/>
        </authorList>
    </citation>
    <scope>NUCLEOTIDE SEQUENCE [LARGE SCALE GENOMIC DNA]</scope>
    <source>
        <strain>23K</strain>
    </source>
</reference>